<feature type="chain" id="PRO_1000084090" description="1-(5-phosphoribosyl)-5-[(5-phosphoribosylamino)methylideneamino] imidazole-4-carboxamide isomerase">
    <location>
        <begin position="1"/>
        <end position="243"/>
    </location>
</feature>
<feature type="active site" description="Proton acceptor" evidence="1">
    <location>
        <position position="8"/>
    </location>
</feature>
<feature type="active site" description="Proton donor" evidence="1">
    <location>
        <position position="129"/>
    </location>
</feature>
<name>HIS4_BRUSI</name>
<gene>
    <name evidence="1" type="primary">hisA</name>
    <name type="ordered locus">BSUIS_A1926</name>
</gene>
<keyword id="KW-0028">Amino-acid biosynthesis</keyword>
<keyword id="KW-0963">Cytoplasm</keyword>
<keyword id="KW-0368">Histidine biosynthesis</keyword>
<keyword id="KW-0413">Isomerase</keyword>
<dbReference type="EC" id="5.3.1.16" evidence="1"/>
<dbReference type="EMBL" id="CP000911">
    <property type="protein sequence ID" value="ABY38937.1"/>
    <property type="molecule type" value="Genomic_DNA"/>
</dbReference>
<dbReference type="RefSeq" id="WP_002965150.1">
    <property type="nucleotide sequence ID" value="NC_010169.1"/>
</dbReference>
<dbReference type="SMR" id="B0CJI5"/>
<dbReference type="GeneID" id="97534653"/>
<dbReference type="KEGG" id="bmt:BSUIS_A1926"/>
<dbReference type="HOGENOM" id="CLU_048577_1_1_5"/>
<dbReference type="UniPathway" id="UPA00031">
    <property type="reaction ID" value="UER00009"/>
</dbReference>
<dbReference type="Proteomes" id="UP000008545">
    <property type="component" value="Chromosome I"/>
</dbReference>
<dbReference type="GO" id="GO:0005737">
    <property type="term" value="C:cytoplasm"/>
    <property type="evidence" value="ECO:0007669"/>
    <property type="project" value="UniProtKB-SubCell"/>
</dbReference>
<dbReference type="GO" id="GO:0003949">
    <property type="term" value="F:1-(5-phosphoribosyl)-5-[(5-phosphoribosylamino)methylideneamino]imidazole-4-carboxamide isomerase activity"/>
    <property type="evidence" value="ECO:0007669"/>
    <property type="project" value="UniProtKB-UniRule"/>
</dbReference>
<dbReference type="GO" id="GO:0000105">
    <property type="term" value="P:L-histidine biosynthetic process"/>
    <property type="evidence" value="ECO:0007669"/>
    <property type="project" value="UniProtKB-UniRule"/>
</dbReference>
<dbReference type="GO" id="GO:0000162">
    <property type="term" value="P:L-tryptophan biosynthetic process"/>
    <property type="evidence" value="ECO:0007669"/>
    <property type="project" value="TreeGrafter"/>
</dbReference>
<dbReference type="CDD" id="cd04732">
    <property type="entry name" value="HisA"/>
    <property type="match status" value="1"/>
</dbReference>
<dbReference type="FunFam" id="3.20.20.70:FF:000009">
    <property type="entry name" value="1-(5-phosphoribosyl)-5-[(5-phosphoribosylamino)methylideneamino] imidazole-4-carboxamide isomerase"/>
    <property type="match status" value="1"/>
</dbReference>
<dbReference type="Gene3D" id="3.20.20.70">
    <property type="entry name" value="Aldolase class I"/>
    <property type="match status" value="1"/>
</dbReference>
<dbReference type="HAMAP" id="MF_01014">
    <property type="entry name" value="HisA"/>
    <property type="match status" value="1"/>
</dbReference>
<dbReference type="InterPro" id="IPR013785">
    <property type="entry name" value="Aldolase_TIM"/>
</dbReference>
<dbReference type="InterPro" id="IPR006062">
    <property type="entry name" value="His_biosynth"/>
</dbReference>
<dbReference type="InterPro" id="IPR006063">
    <property type="entry name" value="HisA_bact_arch"/>
</dbReference>
<dbReference type="InterPro" id="IPR044524">
    <property type="entry name" value="Isoase_HisA-like"/>
</dbReference>
<dbReference type="InterPro" id="IPR023016">
    <property type="entry name" value="Isoase_HisA-like_bact"/>
</dbReference>
<dbReference type="InterPro" id="IPR011060">
    <property type="entry name" value="RibuloseP-bd_barrel"/>
</dbReference>
<dbReference type="NCBIfam" id="TIGR00007">
    <property type="entry name" value="1-(5-phosphoribosyl)-5-[(5-phosphoribosylamino)methylideneamino]imidazole-4-carboxamide isomerase"/>
    <property type="match status" value="1"/>
</dbReference>
<dbReference type="PANTHER" id="PTHR43090">
    <property type="entry name" value="1-(5-PHOSPHORIBOSYL)-5-[(5-PHOSPHORIBOSYLAMINO)METHYLIDENEAMINO] IMIDAZOLE-4-CARBOXAMIDE ISOMERASE"/>
    <property type="match status" value="1"/>
</dbReference>
<dbReference type="PANTHER" id="PTHR43090:SF2">
    <property type="entry name" value="1-(5-PHOSPHORIBOSYL)-5-[(5-PHOSPHORIBOSYLAMINO)METHYLIDENEAMINO] IMIDAZOLE-4-CARBOXAMIDE ISOMERASE"/>
    <property type="match status" value="1"/>
</dbReference>
<dbReference type="Pfam" id="PF00977">
    <property type="entry name" value="His_biosynth"/>
    <property type="match status" value="1"/>
</dbReference>
<dbReference type="SUPFAM" id="SSF51366">
    <property type="entry name" value="Ribulose-phoshate binding barrel"/>
    <property type="match status" value="1"/>
</dbReference>
<comment type="catalytic activity">
    <reaction evidence="1">
        <text>1-(5-phospho-beta-D-ribosyl)-5-[(5-phospho-beta-D-ribosylamino)methylideneamino]imidazole-4-carboxamide = 5-[(5-phospho-1-deoxy-D-ribulos-1-ylimino)methylamino]-1-(5-phospho-beta-D-ribosyl)imidazole-4-carboxamide</text>
        <dbReference type="Rhea" id="RHEA:15469"/>
        <dbReference type="ChEBI" id="CHEBI:58435"/>
        <dbReference type="ChEBI" id="CHEBI:58525"/>
        <dbReference type="EC" id="5.3.1.16"/>
    </reaction>
</comment>
<comment type="pathway">
    <text evidence="1">Amino-acid biosynthesis; L-histidine biosynthesis; L-histidine from 5-phospho-alpha-D-ribose 1-diphosphate: step 4/9.</text>
</comment>
<comment type="subcellular location">
    <subcellularLocation>
        <location evidence="1">Cytoplasm</location>
    </subcellularLocation>
</comment>
<comment type="similarity">
    <text evidence="1">Belongs to the HisA/HisF family.</text>
</comment>
<evidence type="ECO:0000255" key="1">
    <source>
        <dbReference type="HAMAP-Rule" id="MF_01014"/>
    </source>
</evidence>
<protein>
    <recommendedName>
        <fullName evidence="1">1-(5-phosphoribosyl)-5-[(5-phosphoribosylamino)methylideneamino] imidazole-4-carboxamide isomerase</fullName>
        <ecNumber evidence="1">5.3.1.16</ecNumber>
    </recommendedName>
    <alternativeName>
        <fullName evidence="1">Phosphoribosylformimino-5-aminoimidazole carboxamide ribotide isomerase</fullName>
    </alternativeName>
</protein>
<accession>B0CJI5</accession>
<reference key="1">
    <citation type="submission" date="2007-12" db="EMBL/GenBank/DDBJ databases">
        <title>Brucella suis ATCC 23445 whole genome shotgun sequencing project.</title>
        <authorList>
            <person name="Setubal J.C."/>
            <person name="Bowns C."/>
            <person name="Boyle S."/>
            <person name="Crasta O.R."/>
            <person name="Czar M.J."/>
            <person name="Dharmanolla C."/>
            <person name="Gillespie J.J."/>
            <person name="Kenyon R.W."/>
            <person name="Lu J."/>
            <person name="Mane S."/>
            <person name="Mohapatra S."/>
            <person name="Nagrani S."/>
            <person name="Purkayastha A."/>
            <person name="Rajasimha H.K."/>
            <person name="Shallom J.M."/>
            <person name="Shallom S."/>
            <person name="Shukla M."/>
            <person name="Snyder E.E."/>
            <person name="Sobral B.W."/>
            <person name="Wattam A.R."/>
            <person name="Will R."/>
            <person name="Williams K."/>
            <person name="Yoo H."/>
            <person name="Bruce D."/>
            <person name="Detter C."/>
            <person name="Munk C."/>
            <person name="Brettin T.S."/>
        </authorList>
    </citation>
    <scope>NUCLEOTIDE SEQUENCE [LARGE SCALE GENOMIC DNA]</scope>
    <source>
        <strain>ATCC 23445 / NCTC 10510</strain>
    </source>
</reference>
<proteinExistence type="inferred from homology"/>
<organism>
    <name type="scientific">Brucella suis (strain ATCC 23445 / NCTC 10510)</name>
    <dbReference type="NCBI Taxonomy" id="470137"/>
    <lineage>
        <taxon>Bacteria</taxon>
        <taxon>Pseudomonadati</taxon>
        <taxon>Pseudomonadota</taxon>
        <taxon>Alphaproteobacteria</taxon>
        <taxon>Hyphomicrobiales</taxon>
        <taxon>Brucellaceae</taxon>
        <taxon>Brucella/Ochrobactrum group</taxon>
        <taxon>Brucella</taxon>
    </lineage>
</organism>
<sequence length="243" mass="25589">MILFPAIDLKDGQCVRLKLGDMDQATIYNEDPAAQAKAFEDQGFEWLHVVDLNGAFAGESVNGTAVEAILKATKNPVQLGGGIRTLAHIENWLSRGLRRVILGTVAVRDPALVMEACKAFPGQVAVGIDAKGGKVAVEGWAEASRLGVIELAKKFEGAGVAAIIYTDIDRDGVLAGINWDSTLALAEAVSIPVIASGGLASMEDIRRLATPEMRKLEGAISGRALYDGRIDPAEALSVLRAAA</sequence>